<organism>
    <name type="scientific">Homo sapiens</name>
    <name type="common">Human</name>
    <dbReference type="NCBI Taxonomy" id="9606"/>
    <lineage>
        <taxon>Eukaryota</taxon>
        <taxon>Metazoa</taxon>
        <taxon>Chordata</taxon>
        <taxon>Craniata</taxon>
        <taxon>Vertebrata</taxon>
        <taxon>Euteleostomi</taxon>
        <taxon>Mammalia</taxon>
        <taxon>Eutheria</taxon>
        <taxon>Euarchontoglires</taxon>
        <taxon>Primates</taxon>
        <taxon>Haplorrhini</taxon>
        <taxon>Catarrhini</taxon>
        <taxon>Hominidae</taxon>
        <taxon>Homo</taxon>
    </lineage>
</organism>
<accession>O95551</accession>
<accession>B4DKL8</accession>
<accession>B4DQ95</accession>
<accession>Q2TBE2</accession>
<accession>Q5JYM0</accession>
<accession>Q7Z6U5</accession>
<accession>Q9NUK5</accession>
<accession>Q9NYY9</accession>
<name>TYDP2_HUMAN</name>
<sequence length="362" mass="40930">MELGSCLEGGREAAEEEGEPEVKKRRLLCVEFASVASCDAAVAQCFLAENDWEMERALNSYFEPPVEESALERRPETISEPKTYVDLTNEETTDSTTSKISPSEDTQQENGSMFSLITWNIDGLDLNNLSERARGVCSYLALYSPDVIFLQEVIPPYYSYLKKRSSNYEIITGHEEGYFTAIMLKKSRVKLKSQEIIPFPSTKMMRNLLCVHVNVSGNELCLMTSHLESTRGHAAERMNQLKMVLKKMQEAPESATVIFAGDTNLRDREVTRCGGLPNNIVDVWEFLGKPKHCQYTWDTQMNSNLGITAACKLRFDRIFFRAAAEEGHIIPRSLDLLGLEKLDCGRFPSDHWGLLCNLDIIL</sequence>
<evidence type="ECO:0000250" key="1">
    <source>
        <dbReference type="UniProtKB" id="Q9JJX7"/>
    </source>
</evidence>
<evidence type="ECO:0000256" key="2">
    <source>
        <dbReference type="SAM" id="MobiDB-lite"/>
    </source>
</evidence>
<evidence type="ECO:0000269" key="3">
    <source>
    </source>
</evidence>
<evidence type="ECO:0000269" key="4">
    <source>
    </source>
</evidence>
<evidence type="ECO:0000269" key="5">
    <source>
    </source>
</evidence>
<evidence type="ECO:0000269" key="6">
    <source>
    </source>
</evidence>
<evidence type="ECO:0000269" key="7">
    <source>
    </source>
</evidence>
<evidence type="ECO:0000269" key="8">
    <source>
    </source>
</evidence>
<evidence type="ECO:0000269" key="9">
    <source>
    </source>
</evidence>
<evidence type="ECO:0000269" key="10">
    <source>
    </source>
</evidence>
<evidence type="ECO:0000269" key="11">
    <source>
    </source>
</evidence>
<evidence type="ECO:0000269" key="12">
    <source>
    </source>
</evidence>
<evidence type="ECO:0000269" key="13">
    <source>
    </source>
</evidence>
<evidence type="ECO:0000269" key="14">
    <source>
    </source>
</evidence>
<evidence type="ECO:0000269" key="15">
    <source>
    </source>
</evidence>
<evidence type="ECO:0000269" key="16">
    <source>
    </source>
</evidence>
<evidence type="ECO:0000269" key="17">
    <source>
    </source>
</evidence>
<evidence type="ECO:0000269" key="18">
    <source ref="5"/>
</evidence>
<evidence type="ECO:0000303" key="19">
    <source>
    </source>
</evidence>
<evidence type="ECO:0000303" key="20">
    <source>
    </source>
</evidence>
<evidence type="ECO:0000303" key="21">
    <source>
    </source>
</evidence>
<evidence type="ECO:0000303" key="22">
    <source>
    </source>
</evidence>
<evidence type="ECO:0000303" key="23">
    <source>
    </source>
</evidence>
<evidence type="ECO:0000305" key="24"/>
<evidence type="ECO:0000305" key="25">
    <source>
    </source>
</evidence>
<evidence type="ECO:0007744" key="26">
    <source>
        <dbReference type="PDB" id="5INO"/>
    </source>
</evidence>
<evidence type="ECO:0007744" key="27">
    <source>
        <dbReference type="PDB" id="5J3P"/>
    </source>
</evidence>
<evidence type="ECO:0007744" key="28">
    <source>
        <dbReference type="PDB" id="5J3S"/>
    </source>
</evidence>
<evidence type="ECO:0007744" key="29">
    <source>
    </source>
</evidence>
<evidence type="ECO:0007744" key="30">
    <source>
    </source>
</evidence>
<evidence type="ECO:0007744" key="31">
    <source>
    </source>
</evidence>
<evidence type="ECO:0007744" key="32">
    <source>
    </source>
</evidence>
<evidence type="ECO:0007744" key="33">
    <source>
    </source>
</evidence>
<evidence type="ECO:0007829" key="34">
    <source>
        <dbReference type="PDB" id="5INO"/>
    </source>
</evidence>
<evidence type="ECO:0007829" key="35">
    <source>
        <dbReference type="PDB" id="5J3P"/>
    </source>
</evidence>
<evidence type="ECO:0007829" key="36">
    <source>
        <dbReference type="PDB" id="5J3S"/>
    </source>
</evidence>
<evidence type="ECO:0007829" key="37">
    <source>
        <dbReference type="PDB" id="6Q00"/>
    </source>
</evidence>
<proteinExistence type="evidence at protein level"/>
<keyword id="KW-0002">3D-structure</keyword>
<keyword id="KW-0007">Acetylation</keyword>
<keyword id="KW-0025">Alternative splicing</keyword>
<keyword id="KW-0963">Cytoplasm</keyword>
<keyword id="KW-0227">DNA damage</keyword>
<keyword id="KW-0234">DNA repair</keyword>
<keyword id="KW-0945">Host-virus interaction</keyword>
<keyword id="KW-0378">Hydrolase</keyword>
<keyword id="KW-0991">Intellectual disability</keyword>
<keyword id="KW-1017">Isopeptide bond</keyword>
<keyword id="KW-0460">Magnesium</keyword>
<keyword id="KW-0479">Metal-binding</keyword>
<keyword id="KW-0523">Neurodegeneration</keyword>
<keyword id="KW-0540">Nuclease</keyword>
<keyword id="KW-0539">Nucleus</keyword>
<keyword id="KW-0597">Phosphoprotein</keyword>
<keyword id="KW-1267">Proteomics identification</keyword>
<keyword id="KW-1185">Reference proteome</keyword>
<keyword id="KW-0950">Spinocerebellar ataxia</keyword>
<keyword id="KW-0832">Ubl conjugation</keyword>
<protein>
    <recommendedName>
        <fullName>Tyrosyl-DNA phosphodiesterase 2</fullName>
        <shortName evidence="22">Tyr-DNA phosphodiesterase 2</shortName>
        <shortName>hTDP2</shortName>
        <ecNumber evidence="7 11 12 15 16">3.1.4.-</ecNumber>
    </recommendedName>
    <alternativeName>
        <fullName evidence="22">5'-tyrosyl-DNA phosphodiesterase</fullName>
        <shortName>5'-Tyr-DNA phosphodiesterase</shortName>
    </alternativeName>
    <alternativeName>
        <fullName>ETS1-associated protein 2</fullName>
    </alternativeName>
    <alternativeName>
        <fullName>ETS1-associated protein II</fullName>
        <shortName evidence="20">EAPII</shortName>
    </alternativeName>
    <alternativeName>
        <fullName>TRAF and TNF receptor-associated protein</fullName>
    </alternativeName>
    <alternativeName>
        <fullName>Tyrosyl-RNA phosphodiesterase</fullName>
    </alternativeName>
    <alternativeName>
        <fullName>VPg unlinkase</fullName>
    </alternativeName>
</protein>
<reference key="1">
    <citation type="journal article" date="2000" name="J. Biol. Chem.">
        <title>TTRAP, a novel protein that associates with CD40, tumor necrosis factor (TNF) receptor-75 and TNF receptor-associated factors (TRAFs), and that inhibits nuclear factor-kappa B activation.</title>
        <authorList>
            <person name="Pype S."/>
            <person name="Declercq W."/>
            <person name="Ibrahimi A."/>
            <person name="Michiels C."/>
            <person name="Van Rietschoten J.G.I."/>
            <person name="Dewulf N."/>
            <person name="de Boer M."/>
            <person name="Vandenabeele P."/>
            <person name="Huylebroeck D."/>
            <person name="Remacle J.E."/>
        </authorList>
    </citation>
    <scope>NUCLEOTIDE SEQUENCE [MRNA] (ISOFORM 1)</scope>
    <scope>INTERACTION WITH TNFRSF5; TNFRSF8; TNFRSF1B; TRAF2; TRAF3; TRAF5 AND TRAF6</scope>
    <scope>TISSUE SPECIFICITY</scope>
    <source>
        <tissue>Umbilical vein</tissue>
    </source>
</reference>
<reference key="2">
    <citation type="journal article" date="2003" name="Oncogene">
        <title>EAPII interacts with ETS1 and modulates its transcriptional function.</title>
        <authorList>
            <person name="Pei H."/>
            <person name="Yordy J.S."/>
            <person name="Leng Q."/>
            <person name="Zhao Q."/>
            <person name="Watson D.K."/>
            <person name="Li R."/>
        </authorList>
    </citation>
    <scope>NUCLEOTIDE SEQUENCE [MRNA] (ISOFORM 1)</scope>
    <scope>INTERACTION WITH ETS1; ETS2 AND FLI1</scope>
    <scope>SUBCELLULAR LOCATION</scope>
</reference>
<reference key="3">
    <citation type="journal article" date="2000" name="Proc. Natl. Acad. Sci. U.S.A.">
        <title>Gene expression profiling in the human hypothalamus-pituitary-adrenal axis and full-length cDNA cloning.</title>
        <authorList>
            <person name="Hu R.-M."/>
            <person name="Han Z.-G."/>
            <person name="Song H.-D."/>
            <person name="Peng Y.-D."/>
            <person name="Huang Q.-H."/>
            <person name="Ren S.-X."/>
            <person name="Gu Y.-J."/>
            <person name="Huang C.-H."/>
            <person name="Li Y.-B."/>
            <person name="Jiang C.-L."/>
            <person name="Fu G."/>
            <person name="Zhang Q.-H."/>
            <person name="Gu B.-W."/>
            <person name="Dai M."/>
            <person name="Mao Y.-F."/>
            <person name="Gao G.-F."/>
            <person name="Rong R."/>
            <person name="Ye M."/>
            <person name="Zhou J."/>
            <person name="Xu S.-H."/>
            <person name="Gu J."/>
            <person name="Shi J.-X."/>
            <person name="Jin W.-R."/>
            <person name="Zhang C.-K."/>
            <person name="Wu T.-M."/>
            <person name="Huang G.-Y."/>
            <person name="Chen Z."/>
            <person name="Chen M.-D."/>
            <person name="Chen J.-L."/>
        </authorList>
    </citation>
    <scope>NUCLEOTIDE SEQUENCE [LARGE SCALE MRNA] (ISOFORM 1)</scope>
    <source>
        <tissue>Adrenal gland</tissue>
    </source>
</reference>
<reference key="4">
    <citation type="journal article" date="2004" name="Nat. Genet.">
        <title>Complete sequencing and characterization of 21,243 full-length human cDNAs.</title>
        <authorList>
            <person name="Ota T."/>
            <person name="Suzuki Y."/>
            <person name="Nishikawa T."/>
            <person name="Otsuki T."/>
            <person name="Sugiyama T."/>
            <person name="Irie R."/>
            <person name="Wakamatsu A."/>
            <person name="Hayashi K."/>
            <person name="Sato H."/>
            <person name="Nagai K."/>
            <person name="Kimura K."/>
            <person name="Makita H."/>
            <person name="Sekine M."/>
            <person name="Obayashi M."/>
            <person name="Nishi T."/>
            <person name="Shibahara T."/>
            <person name="Tanaka T."/>
            <person name="Ishii S."/>
            <person name="Yamamoto J."/>
            <person name="Saito K."/>
            <person name="Kawai Y."/>
            <person name="Isono Y."/>
            <person name="Nakamura Y."/>
            <person name="Nagahari K."/>
            <person name="Murakami K."/>
            <person name="Yasuda T."/>
            <person name="Iwayanagi T."/>
            <person name="Wagatsuma M."/>
            <person name="Shiratori A."/>
            <person name="Sudo H."/>
            <person name="Hosoiri T."/>
            <person name="Kaku Y."/>
            <person name="Kodaira H."/>
            <person name="Kondo H."/>
            <person name="Sugawara M."/>
            <person name="Takahashi M."/>
            <person name="Kanda K."/>
            <person name="Yokoi T."/>
            <person name="Furuya T."/>
            <person name="Kikkawa E."/>
            <person name="Omura Y."/>
            <person name="Abe K."/>
            <person name="Kamihara K."/>
            <person name="Katsuta N."/>
            <person name="Sato K."/>
            <person name="Tanikawa M."/>
            <person name="Yamazaki M."/>
            <person name="Ninomiya K."/>
            <person name="Ishibashi T."/>
            <person name="Yamashita H."/>
            <person name="Murakawa K."/>
            <person name="Fujimori K."/>
            <person name="Tanai H."/>
            <person name="Kimata M."/>
            <person name="Watanabe M."/>
            <person name="Hiraoka S."/>
            <person name="Chiba Y."/>
            <person name="Ishida S."/>
            <person name="Ono Y."/>
            <person name="Takiguchi S."/>
            <person name="Watanabe S."/>
            <person name="Yosida M."/>
            <person name="Hotuta T."/>
            <person name="Kusano J."/>
            <person name="Kanehori K."/>
            <person name="Takahashi-Fujii A."/>
            <person name="Hara H."/>
            <person name="Tanase T.-O."/>
            <person name="Nomura Y."/>
            <person name="Togiya S."/>
            <person name="Komai F."/>
            <person name="Hara R."/>
            <person name="Takeuchi K."/>
            <person name="Arita M."/>
            <person name="Imose N."/>
            <person name="Musashino K."/>
            <person name="Yuuki H."/>
            <person name="Oshima A."/>
            <person name="Sasaki N."/>
            <person name="Aotsuka S."/>
            <person name="Yoshikawa Y."/>
            <person name="Matsunawa H."/>
            <person name="Ichihara T."/>
            <person name="Shiohata N."/>
            <person name="Sano S."/>
            <person name="Moriya S."/>
            <person name="Momiyama H."/>
            <person name="Satoh N."/>
            <person name="Takami S."/>
            <person name="Terashima Y."/>
            <person name="Suzuki O."/>
            <person name="Nakagawa S."/>
            <person name="Senoh A."/>
            <person name="Mizoguchi H."/>
            <person name="Goto Y."/>
            <person name="Shimizu F."/>
            <person name="Wakebe H."/>
            <person name="Hishigaki H."/>
            <person name="Watanabe T."/>
            <person name="Sugiyama A."/>
            <person name="Takemoto M."/>
            <person name="Kawakami B."/>
            <person name="Yamazaki M."/>
            <person name="Watanabe K."/>
            <person name="Kumagai A."/>
            <person name="Itakura S."/>
            <person name="Fukuzumi Y."/>
            <person name="Fujimori Y."/>
            <person name="Komiyama M."/>
            <person name="Tashiro H."/>
            <person name="Tanigami A."/>
            <person name="Fujiwara T."/>
            <person name="Ono T."/>
            <person name="Yamada K."/>
            <person name="Fujii Y."/>
            <person name="Ozaki K."/>
            <person name="Hirao M."/>
            <person name="Ohmori Y."/>
            <person name="Kawabata A."/>
            <person name="Hikiji T."/>
            <person name="Kobatake N."/>
            <person name="Inagaki H."/>
            <person name="Ikema Y."/>
            <person name="Okamoto S."/>
            <person name="Okitani R."/>
            <person name="Kawakami T."/>
            <person name="Noguchi S."/>
            <person name="Itoh T."/>
            <person name="Shigeta K."/>
            <person name="Senba T."/>
            <person name="Matsumura K."/>
            <person name="Nakajima Y."/>
            <person name="Mizuno T."/>
            <person name="Morinaga M."/>
            <person name="Sasaki M."/>
            <person name="Togashi T."/>
            <person name="Oyama M."/>
            <person name="Hata H."/>
            <person name="Watanabe M."/>
            <person name="Komatsu T."/>
            <person name="Mizushima-Sugano J."/>
            <person name="Satoh T."/>
            <person name="Shirai Y."/>
            <person name="Takahashi Y."/>
            <person name="Nakagawa K."/>
            <person name="Okumura K."/>
            <person name="Nagase T."/>
            <person name="Nomura N."/>
            <person name="Kikuchi H."/>
            <person name="Masuho Y."/>
            <person name="Yamashita R."/>
            <person name="Nakai K."/>
            <person name="Yada T."/>
            <person name="Nakamura Y."/>
            <person name="Ohara O."/>
            <person name="Isogai T."/>
            <person name="Sugano S."/>
        </authorList>
    </citation>
    <scope>NUCLEOTIDE SEQUENCE [LARGE SCALE MRNA] (ISOFORMS 1 AND 2)</scope>
    <scope>NUCLEOTIDE SEQUENCE [LARGE SCALE MRNA] OF 23-362 (ISOFORM 3)</scope>
    <source>
        <tissue>Colon</tissue>
        <tissue>Placenta</tissue>
    </source>
</reference>
<reference key="5">
    <citation type="submission" date="2004-04" db="EMBL/GenBank/DDBJ databases">
        <authorList>
            <consortium name="SeattleSNPs variation discovery resource"/>
        </authorList>
    </citation>
    <scope>NUCLEOTIDE SEQUENCE [GENOMIC DNA]</scope>
    <scope>VARIANTS GLU-249 AND GLN-268</scope>
</reference>
<reference key="6">
    <citation type="journal article" date="2003" name="Nature">
        <title>The DNA sequence and analysis of human chromosome 6.</title>
        <authorList>
            <person name="Mungall A.J."/>
            <person name="Palmer S.A."/>
            <person name="Sims S.K."/>
            <person name="Edwards C.A."/>
            <person name="Ashurst J.L."/>
            <person name="Wilming L."/>
            <person name="Jones M.C."/>
            <person name="Horton R."/>
            <person name="Hunt S.E."/>
            <person name="Scott C.E."/>
            <person name="Gilbert J.G.R."/>
            <person name="Clamp M.E."/>
            <person name="Bethel G."/>
            <person name="Milne S."/>
            <person name="Ainscough R."/>
            <person name="Almeida J.P."/>
            <person name="Ambrose K.D."/>
            <person name="Andrews T.D."/>
            <person name="Ashwell R.I.S."/>
            <person name="Babbage A.K."/>
            <person name="Bagguley C.L."/>
            <person name="Bailey J."/>
            <person name="Banerjee R."/>
            <person name="Barker D.J."/>
            <person name="Barlow K.F."/>
            <person name="Bates K."/>
            <person name="Beare D.M."/>
            <person name="Beasley H."/>
            <person name="Beasley O."/>
            <person name="Bird C.P."/>
            <person name="Blakey S.E."/>
            <person name="Bray-Allen S."/>
            <person name="Brook J."/>
            <person name="Brown A.J."/>
            <person name="Brown J.Y."/>
            <person name="Burford D.C."/>
            <person name="Burrill W."/>
            <person name="Burton J."/>
            <person name="Carder C."/>
            <person name="Carter N.P."/>
            <person name="Chapman J.C."/>
            <person name="Clark S.Y."/>
            <person name="Clark G."/>
            <person name="Clee C.M."/>
            <person name="Clegg S."/>
            <person name="Cobley V."/>
            <person name="Collier R.E."/>
            <person name="Collins J.E."/>
            <person name="Colman L.K."/>
            <person name="Corby N.R."/>
            <person name="Coville G.J."/>
            <person name="Culley K.M."/>
            <person name="Dhami P."/>
            <person name="Davies J."/>
            <person name="Dunn M."/>
            <person name="Earthrowl M.E."/>
            <person name="Ellington A.E."/>
            <person name="Evans K.A."/>
            <person name="Faulkner L."/>
            <person name="Francis M.D."/>
            <person name="Frankish A."/>
            <person name="Frankland J."/>
            <person name="French L."/>
            <person name="Garner P."/>
            <person name="Garnett J."/>
            <person name="Ghori M.J."/>
            <person name="Gilby L.M."/>
            <person name="Gillson C.J."/>
            <person name="Glithero R.J."/>
            <person name="Grafham D.V."/>
            <person name="Grant M."/>
            <person name="Gribble S."/>
            <person name="Griffiths C."/>
            <person name="Griffiths M.N.D."/>
            <person name="Hall R."/>
            <person name="Halls K.S."/>
            <person name="Hammond S."/>
            <person name="Harley J.L."/>
            <person name="Hart E.A."/>
            <person name="Heath P.D."/>
            <person name="Heathcott R."/>
            <person name="Holmes S.J."/>
            <person name="Howden P.J."/>
            <person name="Howe K.L."/>
            <person name="Howell G.R."/>
            <person name="Huckle E."/>
            <person name="Humphray S.J."/>
            <person name="Humphries M.D."/>
            <person name="Hunt A.R."/>
            <person name="Johnson C.M."/>
            <person name="Joy A.A."/>
            <person name="Kay M."/>
            <person name="Keenan S.J."/>
            <person name="Kimberley A.M."/>
            <person name="King A."/>
            <person name="Laird G.K."/>
            <person name="Langford C."/>
            <person name="Lawlor S."/>
            <person name="Leongamornlert D.A."/>
            <person name="Leversha M."/>
            <person name="Lloyd C.R."/>
            <person name="Lloyd D.M."/>
            <person name="Loveland J.E."/>
            <person name="Lovell J."/>
            <person name="Martin S."/>
            <person name="Mashreghi-Mohammadi M."/>
            <person name="Maslen G.L."/>
            <person name="Matthews L."/>
            <person name="McCann O.T."/>
            <person name="McLaren S.J."/>
            <person name="McLay K."/>
            <person name="McMurray A."/>
            <person name="Moore M.J.F."/>
            <person name="Mullikin J.C."/>
            <person name="Niblett D."/>
            <person name="Nickerson T."/>
            <person name="Novik K.L."/>
            <person name="Oliver K."/>
            <person name="Overton-Larty E.K."/>
            <person name="Parker A."/>
            <person name="Patel R."/>
            <person name="Pearce A.V."/>
            <person name="Peck A.I."/>
            <person name="Phillimore B.J.C.T."/>
            <person name="Phillips S."/>
            <person name="Plumb R.W."/>
            <person name="Porter K.M."/>
            <person name="Ramsey Y."/>
            <person name="Ranby S.A."/>
            <person name="Rice C.M."/>
            <person name="Ross M.T."/>
            <person name="Searle S.M."/>
            <person name="Sehra H.K."/>
            <person name="Sheridan E."/>
            <person name="Skuce C.D."/>
            <person name="Smith S."/>
            <person name="Smith M."/>
            <person name="Spraggon L."/>
            <person name="Squares S.L."/>
            <person name="Steward C.A."/>
            <person name="Sycamore N."/>
            <person name="Tamlyn-Hall G."/>
            <person name="Tester J."/>
            <person name="Theaker A.J."/>
            <person name="Thomas D.W."/>
            <person name="Thorpe A."/>
            <person name="Tracey A."/>
            <person name="Tromans A."/>
            <person name="Tubby B."/>
            <person name="Wall M."/>
            <person name="Wallis J.M."/>
            <person name="West A.P."/>
            <person name="White S.S."/>
            <person name="Whitehead S.L."/>
            <person name="Whittaker H."/>
            <person name="Wild A."/>
            <person name="Willey D.J."/>
            <person name="Wilmer T.E."/>
            <person name="Wood J.M."/>
            <person name="Wray P.W."/>
            <person name="Wyatt J.C."/>
            <person name="Young L."/>
            <person name="Younger R.M."/>
            <person name="Bentley D.R."/>
            <person name="Coulson A."/>
            <person name="Durbin R.M."/>
            <person name="Hubbard T."/>
            <person name="Sulston J.E."/>
            <person name="Dunham I."/>
            <person name="Rogers J."/>
            <person name="Beck S."/>
        </authorList>
    </citation>
    <scope>NUCLEOTIDE SEQUENCE [LARGE SCALE GENOMIC DNA]</scope>
</reference>
<reference key="7">
    <citation type="journal article" date="2004" name="Genome Res.">
        <title>The status, quality, and expansion of the NIH full-length cDNA project: the Mammalian Gene Collection (MGC).</title>
        <authorList>
            <consortium name="The MGC Project Team"/>
        </authorList>
    </citation>
    <scope>NUCLEOTIDE SEQUENCE [LARGE SCALE MRNA] (ISOFORM 1)</scope>
    <source>
        <tissue>Duodenum</tissue>
        <tissue>Skin</tissue>
    </source>
</reference>
<reference key="8">
    <citation type="journal article" date="2003" name="Virus Res.">
        <title>Association of the nucleocapsid protein of the Seoul and Hantaan hantaviruses with small ubiquitin-like modifier-1-related molecules.</title>
        <authorList>
            <person name="Lee B.H."/>
            <person name="Yoshimatsu K."/>
            <person name="Maeda A."/>
            <person name="Ochiai K."/>
            <person name="Morimatsu M."/>
            <person name="Araki K."/>
            <person name="Ogino M."/>
            <person name="Morikawa S."/>
            <person name="Arikawa J."/>
        </authorList>
    </citation>
    <scope>INTERACTION WITH HANTAAN HANTAVIRUS NUCLEOPROTEIN (MICROBIAL INFECTION)</scope>
    <scope>INTERACTION WITH SEOUL HANTAVIRUS NUCLEOPROTEIN (MICROBIAL INFECTION)</scope>
</reference>
<reference key="9">
    <citation type="journal article" date="2007" name="Development">
        <title>Ttrap is an essential modulator of Smad3-dependent Nodal signaling during zebrafish gastrulation and left-right axis determination.</title>
        <authorList>
            <person name="Esguerra C.V."/>
            <person name="Nelles L."/>
            <person name="Vermeire L."/>
            <person name="Ibrahimi A."/>
            <person name="Crawford A.D."/>
            <person name="Derua R."/>
            <person name="Janssens E."/>
            <person name="Waelkens E."/>
            <person name="Carmeliet P."/>
            <person name="Collen D."/>
            <person name="Huylebroeck D."/>
        </authorList>
    </citation>
    <scope>INTERACTION WITH ACVR1B AND SMAD3</scope>
    <scope>PHOSPHORYLATION AT THR-88 AND THR-92</scope>
    <scope>MUTAGENESIS OF THR-88 AND THR-92</scope>
</reference>
<reference key="10">
    <citation type="journal article" date="2009" name="Anal. Chem.">
        <title>Lys-N and trypsin cover complementary parts of the phosphoproteome in a refined SCX-based approach.</title>
        <authorList>
            <person name="Gauci S."/>
            <person name="Helbig A.O."/>
            <person name="Slijper M."/>
            <person name="Krijgsveld J."/>
            <person name="Heck A.J."/>
            <person name="Mohammed S."/>
        </authorList>
    </citation>
    <scope>ACETYLATION [LARGE SCALE ANALYSIS] AT MET-1</scope>
    <scope>IDENTIFICATION BY MASS SPECTROMETRY [LARGE SCALE ANALYSIS]</scope>
</reference>
<reference key="11">
    <citation type="journal article" date="2009" name="Nature">
        <title>A human 5'-tyrosyl DNA phosphodiesterase that repairs topoisomerase-mediated DNA damage.</title>
        <authorList>
            <person name="Ledesma F.C."/>
            <person name="El Khamisy S.F."/>
            <person name="Zuma M.C."/>
            <person name="Osborn K."/>
            <person name="Caldecott K.W."/>
        </authorList>
    </citation>
    <scope>FUNCTION AS TYROSYL-DNA PHOSPHODIESTERASE</scope>
    <scope>CATALYTIC ACTIVITY</scope>
    <scope>SUBCELLULAR LOCATION</scope>
    <scope>COFACTOR</scope>
    <scope>MUTAGENESIS OF GLU-152 AND ASP-262</scope>
</reference>
<reference key="12">
    <citation type="journal article" date="2011" name="BMC Syst. Biol.">
        <title>Initial characterization of the human central proteome.</title>
        <authorList>
            <person name="Burkard T.R."/>
            <person name="Planyavsky M."/>
            <person name="Kaupe I."/>
            <person name="Breitwieser F.P."/>
            <person name="Buerckstuemmer T."/>
            <person name="Bennett K.L."/>
            <person name="Superti-Furga G."/>
            <person name="Colinge J."/>
        </authorList>
    </citation>
    <scope>IDENTIFICATION BY MASS SPECTROMETRY [LARGE SCALE ANALYSIS]</scope>
</reference>
<reference key="13">
    <citation type="journal article" date="2011" name="J. Biol. Chem.">
        <title>TDP2/TTRAP is the major 5'-tyrosyl DNA phosphodiesterase activity in vertebrate cells and is critical for cellular resistance to topoisomerase II-induced DNA damage.</title>
        <authorList>
            <person name="Zeng Z."/>
            <person name="Cortes-Ledesma F."/>
            <person name="El Khamisy S.F."/>
            <person name="Caldecott K.W."/>
        </authorList>
    </citation>
    <scope>FUNCTION</scope>
</reference>
<reference key="14">
    <citation type="journal article" date="2011" name="PLoS ONE">
        <title>TTRAP is a novel component of the non-canonical TRAF6-TAK1 TGF-beta signaling pathway.</title>
        <authorList>
            <person name="Varady G."/>
            <person name="Sarkadi B."/>
            <person name="Fatyol K."/>
        </authorList>
    </citation>
    <scope>FUNCTION</scope>
    <scope>UBIQUITINATION</scope>
</reference>
<reference key="15">
    <citation type="journal article" date="2012" name="BMC Res. Notes">
        <title>Characterization of magnesium requirement of human 5'-tyrosyl DNA phosphodiesterase mediated reaction.</title>
        <authorList>
            <person name="Adhikari S."/>
            <person name="Karmahapatra S.K."/>
            <person name="Karve T.M."/>
            <person name="Bandyopadhyay S."/>
            <person name="Woodrick J."/>
            <person name="Manthena P.V."/>
            <person name="Glasgow E."/>
            <person name="Byers S."/>
            <person name="Saha T."/>
            <person name="Uren A."/>
        </authorList>
    </citation>
    <scope>FUNCTION</scope>
    <scope>CATALYTIC ACTIVITY</scope>
    <scope>COFACTOR</scope>
</reference>
<reference key="16">
    <citation type="journal article" date="2012" name="Cell Death Differ.">
        <title>The PML nuclear bodies-associated protein TTRAP regulates ribosome biogenesis in nucleolar cavities upon proteasome inhibition.</title>
        <authorList>
            <person name="Vilotti S."/>
            <person name="Biagioli M."/>
            <person name="Foti R."/>
            <person name="Dal Ferro M."/>
            <person name="Lavina Z.S."/>
            <person name="Collavin L."/>
            <person name="Del Sal G."/>
            <person name="Zucchelli S."/>
            <person name="Gustincich S."/>
        </authorList>
    </citation>
    <scope>FUNCTION</scope>
    <scope>SUBCELLULAR LOCATION</scope>
</reference>
<reference key="17">
    <citation type="journal article" date="2012" name="J. Biol. Chem.">
        <title>Biochemical characterization of human Tyrosyl DNA Phosphodiesterase 2 (TDP2/TTRAP): a Mg2+/Mn2+-dependent phosphodiesterase specific for the repair of topoisomerase cleavage complexes.</title>
        <authorList>
            <person name="Gao R."/>
            <person name="Huang S.Y."/>
            <person name="Marchand C."/>
            <person name="Pommier Y."/>
        </authorList>
    </citation>
    <scope>FUNCTION</scope>
    <scope>CATALYTIC ACTIVITY</scope>
    <scope>COFACTOR</scope>
    <scope>BIOPHYSICOCHEMICAL PROPERTIES</scope>
    <scope>MUTAGENESIS OF ASN-120; GLU-152; ASP-262 AND HIS-351</scope>
</reference>
<reference key="18">
    <citation type="journal article" date="2012" name="Mol. Cell. Proteomics">
        <title>Comparative large-scale characterisation of plant vs. mammal proteins reveals similar and idiosyncratic N-alpha acetylation features.</title>
        <authorList>
            <person name="Bienvenut W.V."/>
            <person name="Sumpton D."/>
            <person name="Martinez A."/>
            <person name="Lilla S."/>
            <person name="Espagne C."/>
            <person name="Meinnel T."/>
            <person name="Giglione C."/>
        </authorList>
    </citation>
    <scope>ACETYLATION [LARGE SCALE ANALYSIS] AT MET-1</scope>
    <scope>IDENTIFICATION BY MASS SPECTROMETRY [LARGE SCALE ANALYSIS]</scope>
</reference>
<reference key="19">
    <citation type="journal article" date="2012" name="Proc. Natl. Acad. Sci. U.S.A.">
        <title>N-terminal acetylome analyses and functional insights of the N-terminal acetyltransferase NatB.</title>
        <authorList>
            <person name="Van Damme P."/>
            <person name="Lasa M."/>
            <person name="Polevoda B."/>
            <person name="Gazquez C."/>
            <person name="Elosegui-Artola A."/>
            <person name="Kim D.S."/>
            <person name="De Juan-Pardo E."/>
            <person name="Demeyer K."/>
            <person name="Hole K."/>
            <person name="Larrea E."/>
            <person name="Timmerman E."/>
            <person name="Prieto J."/>
            <person name="Arnesen T."/>
            <person name="Sherman F."/>
            <person name="Gevaert K."/>
            <person name="Aldabe R."/>
        </authorList>
    </citation>
    <scope>ACETYLATION [LARGE SCALE ANALYSIS] AT MET-1</scope>
    <scope>IDENTIFICATION BY MASS SPECTROMETRY [LARGE SCALE ANALYSIS]</scope>
</reference>
<reference key="20">
    <citation type="journal article" date="2012" name="Proc. Natl. Acad. Sci. U.S.A.">
        <title>An RNA virus hijacks an incognito function of a DNA repair enzyme.</title>
        <authorList>
            <person name="Virgen-Slane R."/>
            <person name="Rozovics J.M."/>
            <person name="Fitzgerald K.D."/>
            <person name="Ngo T."/>
            <person name="Chou W."/>
            <person name="van der Heden van Noort G.J."/>
            <person name="Filippov D.V."/>
            <person name="Gershon P.D."/>
            <person name="Semler B.L."/>
        </authorList>
    </citation>
    <scope>FUNCTION AS TYROSYL-RNA PHOSPHODIESTERASE (MICROBIAL INFECTION)</scope>
    <scope>SUBCELLULAR LOCATION (MICROBIAL INFECTION)</scope>
</reference>
<reference key="21">
    <citation type="journal article" date="2013" name="J. Proteome Res.">
        <title>Toward a comprehensive characterization of a human cancer cell phosphoproteome.</title>
        <authorList>
            <person name="Zhou H."/>
            <person name="Di Palma S."/>
            <person name="Preisinger C."/>
            <person name="Peng M."/>
            <person name="Polat A.N."/>
            <person name="Heck A.J."/>
            <person name="Mohammed S."/>
        </authorList>
    </citation>
    <scope>PHOSPHORYLATION [LARGE SCALE ANALYSIS] AT SER-95</scope>
    <scope>IDENTIFICATION BY MASS SPECTROMETRY [LARGE SCALE ANALYSIS]</scope>
    <source>
        <tissue>Erythroleukemia</tissue>
    </source>
</reference>
<reference key="22">
    <citation type="journal article" date="2014" name="Nat. Genet.">
        <title>TDP2 protects transcription from abortive topoisomerase activity and is required for normal neural function.</title>
        <authorList>
            <person name="Gomez-Herreros F."/>
            <person name="Schuurs-Hoeijmakers J.H."/>
            <person name="McCormack M."/>
            <person name="Greally M.T."/>
            <person name="Rulten S."/>
            <person name="Romero-Granados R."/>
            <person name="Counihan T.J."/>
            <person name="Chaila E."/>
            <person name="Conroy J."/>
            <person name="Ennis S."/>
            <person name="Delanty N."/>
            <person name="Cortes-Ledesma F."/>
            <person name="de Brouwer A.P."/>
            <person name="Cavalleri G.L."/>
            <person name="El-Khamisy S.F."/>
            <person name="de Vries B.B."/>
            <person name="Caldecott K.W."/>
        </authorList>
    </citation>
    <scope>FUNCTION</scope>
    <scope>TISSUE SPECIFICITY</scope>
    <scope>INVOLVEMENT IN SCAR23</scope>
    <scope>VARIANT VAL-307</scope>
</reference>
<reference key="23">
    <citation type="journal article" date="2017" name="Nat. Struct. Mol. Biol.">
        <title>Site-specific mapping of the human SUMO proteome reveals co-modification with phosphorylation.</title>
        <authorList>
            <person name="Hendriks I.A."/>
            <person name="Lyon D."/>
            <person name="Young C."/>
            <person name="Jensen L.J."/>
            <person name="Vertegaal A.C."/>
            <person name="Nielsen M.L."/>
        </authorList>
    </citation>
    <scope>SUMOYLATION [LARGE SCALE ANALYSIS] AT LYS-23 AND LYS-82</scope>
    <scope>IDENTIFICATION BY MASS SPECTROMETRY [LARGE SCALE ANALYSIS]</scope>
</reference>
<reference key="24">
    <citation type="journal article" date="2020" name="Viruses">
        <title>Effects of TDP2/VPg Unlinkase Activity on Picornavirus Infections Downstream of Virus Translation.</title>
        <authorList>
            <person name="Holmes A.C."/>
            <person name="Zagnoli-Vieira G."/>
            <person name="Caldecott K.W."/>
            <person name="Semler B.L."/>
        </authorList>
    </citation>
    <scope>FUNCTION (MICROBIAL INFECTION)</scope>
    <scope>MUTAGENESIS OF HIS-351</scope>
</reference>
<reference evidence="27 28" key="25">
    <citation type="journal article" date="2016" name="Biochem. J.">
        <title>Mode of action of DNA-competitive small molecule inhibitors of tyrosyl DNA phosphodiesterase 2.</title>
        <authorList>
            <person name="Hornyak P."/>
            <person name="Askwith T."/>
            <person name="Walker S."/>
            <person name="Komulainen E."/>
            <person name="Paradowski M."/>
            <person name="Pennicott L.E."/>
            <person name="Bartlett E.J."/>
            <person name="Brissett N.C."/>
            <person name="Raoof A."/>
            <person name="Watson M."/>
            <person name="Jordan A.M."/>
            <person name="Ogilvie D.J."/>
            <person name="Ward S.E."/>
            <person name="Atack J.R."/>
            <person name="Pearl L.H."/>
            <person name="Caldecott K.W."/>
            <person name="Oliver A.W."/>
        </authorList>
    </citation>
    <scope>X-RAY CRYSTALLOGRAPHY (3.10 ANGSTROMS) OF 113-362</scope>
    <scope>FUNCTION</scope>
    <scope>CATALYTIC ACTIVITY</scope>
    <scope>COFACTOR</scope>
</reference>
<reference evidence="26" key="26">
    <citation type="journal article" date="2016" name="Nucleic Acids Res.">
        <title>Reversal of DNA damage induced Topoisomerase 2 DNA-protein crosslinks by Tdp2.</title>
        <authorList>
            <person name="Schellenberg M.J."/>
            <person name="Perera L."/>
            <person name="Strom C.N."/>
            <person name="Waters C.A."/>
            <person name="Monian B."/>
            <person name="Appel C.D."/>
            <person name="Vilas C.K."/>
            <person name="Williams J.G."/>
            <person name="Ramsden D.A."/>
            <person name="Williams R.S."/>
        </authorList>
    </citation>
    <scope>X-RAY CRYSTALLOGRAPHY (3.21 ANGSTROMS) OF 108-362 IN COMPLEX WITH DNA</scope>
    <scope>FUNCTION</scope>
    <scope>CATALYTIC ACTIVITY</scope>
    <scope>COFACTOR</scope>
    <scope>ACTIVE SITE</scope>
    <scope>CHARACTERIZATION OF VARIANT VAL-307</scope>
    <scope>MUTAGENESIS OF TYR-178; ARG-206; ASP-262; LEU-305; ASP-316; ASP-350 AND HIS-351</scope>
</reference>
<feature type="chain" id="PRO_0000065678" description="Tyrosyl-DNA phosphodiesterase 2">
    <location>
        <begin position="1"/>
        <end position="362"/>
    </location>
</feature>
<feature type="region of interest" description="Disordered" evidence="2">
    <location>
        <begin position="1"/>
        <end position="20"/>
    </location>
</feature>
<feature type="region of interest" description="Disordered" evidence="2">
    <location>
        <begin position="87"/>
        <end position="109"/>
    </location>
</feature>
<feature type="region of interest" description="Interaction with 5' end of substrate DNA" evidence="1">
    <location>
        <begin position="120"/>
        <end position="124"/>
    </location>
</feature>
<feature type="region of interest" description="Interaction with 5' end of substrate DNA" evidence="1">
    <location>
        <begin position="226"/>
        <end position="231"/>
    </location>
</feature>
<feature type="region of interest" description="Interaction with 5' end of substrate DNA" evidence="1">
    <location>
        <begin position="264"/>
        <end position="266"/>
    </location>
</feature>
<feature type="compositionally biased region" description="Polar residues" evidence="2">
    <location>
        <begin position="94"/>
        <end position="109"/>
    </location>
</feature>
<feature type="active site" description="Proton donor/acceptor" evidence="25">
    <location>
        <position position="262"/>
    </location>
</feature>
<feature type="binding site" evidence="16 27">
    <location>
        <position position="122"/>
    </location>
    <ligand>
        <name>Mg(2+)</name>
        <dbReference type="ChEBI" id="CHEBI:18420"/>
    </ligand>
</feature>
<feature type="binding site" evidence="16 27">
    <location>
        <position position="152"/>
    </location>
    <ligand>
        <name>Mg(2+)</name>
        <dbReference type="ChEBI" id="CHEBI:18420"/>
    </ligand>
</feature>
<feature type="site" description="Interaction with 5' end of substrate DNA" evidence="1">
    <location>
        <position position="178"/>
    </location>
</feature>
<feature type="site" description="Interaction with 5' end of substrate DNA" evidence="1">
    <location>
        <position position="297"/>
    </location>
</feature>
<feature type="site" description="Interaction with 5' end of substrate DNA" evidence="1">
    <location>
        <position position="315"/>
    </location>
</feature>
<feature type="site" description="Interaction with 5' end of substrate DNA" evidence="1">
    <location>
        <position position="351"/>
    </location>
</feature>
<feature type="modified residue" description="N-acetylmethionine" evidence="29 30 31">
    <location>
        <position position="1"/>
    </location>
</feature>
<feature type="modified residue" description="Phosphothreonine; by ACVR1B" evidence="6">
    <location>
        <position position="88"/>
    </location>
</feature>
<feature type="modified residue" description="Phosphothreonine; by ACVR1B" evidence="6">
    <location>
        <position position="92"/>
    </location>
</feature>
<feature type="modified residue" description="Phosphoserine" evidence="32">
    <location>
        <position position="95"/>
    </location>
</feature>
<feature type="cross-link" description="Glycyl lysine isopeptide (Lys-Gly) (interchain with G-Cter in SUMO2)" evidence="33">
    <location>
        <position position="23"/>
    </location>
</feature>
<feature type="cross-link" description="Glycyl lysine isopeptide (Lys-Gly) (interchain with G-Cter in SUMO2)" evidence="33">
    <location>
        <position position="82"/>
    </location>
</feature>
<feature type="splice variant" id="VSP_038523" description="In isoform 2." evidence="21">
    <original>M</original>
    <variation>MRERHDTGACAEPRVGLLFRLKGRCRGGRKM</variation>
    <location>
        <position position="1"/>
    </location>
</feature>
<feature type="splice variant" id="VSP_038524" description="In isoform 3." evidence="21">
    <location>
        <begin position="60"/>
        <end position="137"/>
    </location>
</feature>
<feature type="sequence variant" id="VAR_051464" description="In dbSNP:rs35977478.">
    <original>S</original>
    <variation>G</variation>
    <location>
        <position position="166"/>
    </location>
</feature>
<feature type="sequence variant" id="VAR_022634" description="In dbSNP:rs2294689." evidence="18">
    <original>Q</original>
    <variation>E</variation>
    <location>
        <position position="249"/>
    </location>
</feature>
<feature type="sequence variant" id="VAR_022635" description="In dbSNP:rs17249952." evidence="18">
    <original>R</original>
    <variation>Q</variation>
    <location>
        <position position="268"/>
    </location>
</feature>
<feature type="sequence variant" id="VAR_076867" description="Slightly decreased phosphodiesterase activity; dbSNP:rs77273535." evidence="14">
    <original>I</original>
    <variation>V</variation>
    <location>
        <position position="307"/>
    </location>
</feature>
<feature type="mutagenesis site" description="Abolishes function, but retains ability to interact with SMAD3; when associated with A-92." evidence="6">
    <original>T</original>
    <variation>A</variation>
    <location>
        <position position="88"/>
    </location>
</feature>
<feature type="mutagenesis site" description="Abolishes function, but retains ability to interact with SMAD3; when associated with A-88." evidence="6">
    <original>T</original>
    <variation>A</variation>
    <location>
        <position position="92"/>
    </location>
</feature>
<feature type="mutagenesis site" description="Strongly reduced phosphodiesterase activity." evidence="12">
    <original>N</original>
    <variation>A</variation>
    <location>
        <position position="120"/>
    </location>
</feature>
<feature type="mutagenesis site" description="Loss of phosphodiesterase activity." evidence="7 12">
    <original>E</original>
    <variation>A</variation>
    <location>
        <position position="152"/>
    </location>
</feature>
<feature type="mutagenesis site" description="Strongly decreased phosphodiesterase activity." evidence="15">
    <original>Y</original>
    <variation>F</variation>
    <variation>W</variation>
    <location>
        <position position="178"/>
    </location>
</feature>
<feature type="mutagenesis site" description="Loss of phosphodiesterase activity." evidence="15">
    <original>R</original>
    <variation>A</variation>
    <variation>K</variation>
    <location>
        <position position="206"/>
    </location>
</feature>
<feature type="mutagenesis site" description="Loss of phosphodiesterase activity." evidence="7 12">
    <original>D</original>
    <variation>A</variation>
    <location>
        <position position="262"/>
    </location>
</feature>
<feature type="mutagenesis site" description="Loss of phosphodiesterase activity." evidence="15">
    <original>D</original>
    <variation>H</variation>
    <variation>L</variation>
    <variation>M</variation>
    <location>
        <position position="262"/>
    </location>
</feature>
<feature type="mutagenesis site" description="Decreased phosphodiesterase activity." evidence="15">
    <original>L</original>
    <variation>A</variation>
    <variation>F</variation>
    <variation>W</variation>
    <location>
        <position position="305"/>
    </location>
</feature>
<feature type="mutagenesis site" description="Strongly decreased phosphodiesterase activity." evidence="15">
    <original>D</original>
    <variation>N</variation>
    <location>
        <position position="316"/>
    </location>
</feature>
<feature type="mutagenesis site" description="Strongly decreased phosphodiesterase activity." evidence="15">
    <original>D</original>
    <variation>N</variation>
    <location>
        <position position="350"/>
    </location>
</feature>
<feature type="mutagenesis site" description="Loss of phosphodiesterase activity. Delayed poliovirus replication in host cells." evidence="12 17">
    <original>H</original>
    <variation>A</variation>
    <location>
        <position position="351"/>
    </location>
</feature>
<feature type="mutagenesis site" description="Loss of phosphodiesterase activity." evidence="15">
    <original>H</original>
    <variation>Q</variation>
    <location>
        <position position="351"/>
    </location>
</feature>
<feature type="sequence conflict" description="In Ref. 3; AAF64144." evidence="24" ref="3">
    <original>E</original>
    <variation>R</variation>
    <location>
        <position position="31"/>
    </location>
</feature>
<feature type="sequence conflict" description="In Ref. 4; BAA92119." evidence="24" ref="4">
    <original>Y</original>
    <variation>C</variation>
    <location>
        <position position="61"/>
    </location>
</feature>
<feature type="sequence conflict" description="In Ref. 4; BAG60857." evidence="24" ref="4">
    <original>E</original>
    <variation>G</variation>
    <location>
        <position position="72"/>
    </location>
</feature>
<feature type="helix" evidence="37">
    <location>
        <begin position="25"/>
        <end position="36"/>
    </location>
</feature>
<feature type="helix" evidence="37">
    <location>
        <begin position="40"/>
        <end position="49"/>
    </location>
</feature>
<feature type="turn" evidence="37">
    <location>
        <begin position="50"/>
        <end position="52"/>
    </location>
</feature>
<feature type="helix" evidence="37">
    <location>
        <begin position="54"/>
        <end position="62"/>
    </location>
</feature>
<feature type="strand" evidence="35">
    <location>
        <begin position="113"/>
        <end position="120"/>
    </location>
</feature>
<feature type="helix" evidence="35">
    <location>
        <begin position="129"/>
        <end position="143"/>
    </location>
</feature>
<feature type="strand" evidence="35">
    <location>
        <begin position="146"/>
        <end position="153"/>
    </location>
</feature>
<feature type="helix" evidence="35">
    <location>
        <begin position="155"/>
        <end position="164"/>
    </location>
</feature>
<feature type="strand" evidence="35">
    <location>
        <begin position="167"/>
        <end position="173"/>
    </location>
</feature>
<feature type="strand" evidence="35">
    <location>
        <begin position="175"/>
        <end position="177"/>
    </location>
</feature>
<feature type="strand" evidence="35">
    <location>
        <begin position="179"/>
        <end position="185"/>
    </location>
</feature>
<feature type="turn" evidence="35">
    <location>
        <begin position="186"/>
        <end position="188"/>
    </location>
</feature>
<feature type="strand" evidence="35">
    <location>
        <begin position="189"/>
        <end position="198"/>
    </location>
</feature>
<feature type="strand" evidence="36">
    <location>
        <begin position="203"/>
        <end position="205"/>
    </location>
</feature>
<feature type="strand" evidence="35">
    <location>
        <begin position="207"/>
        <end position="215"/>
    </location>
</feature>
<feature type="strand" evidence="35">
    <location>
        <begin position="218"/>
        <end position="224"/>
    </location>
</feature>
<feature type="helix" evidence="34">
    <location>
        <begin position="231"/>
        <end position="233"/>
    </location>
</feature>
<feature type="helix" evidence="35">
    <location>
        <begin position="234"/>
        <end position="249"/>
    </location>
</feature>
<feature type="strand" evidence="35">
    <location>
        <begin position="255"/>
        <end position="262"/>
    </location>
</feature>
<feature type="helix" evidence="35">
    <location>
        <begin position="269"/>
        <end position="272"/>
    </location>
</feature>
<feature type="helix" evidence="35">
    <location>
        <begin position="283"/>
        <end position="286"/>
    </location>
</feature>
<feature type="strand" evidence="34">
    <location>
        <begin position="291"/>
        <end position="294"/>
    </location>
</feature>
<feature type="strand" evidence="35">
    <location>
        <begin position="296"/>
        <end position="298"/>
    </location>
</feature>
<feature type="turn" evidence="35">
    <location>
        <begin position="299"/>
        <end position="301"/>
    </location>
</feature>
<feature type="strand" evidence="35">
    <location>
        <begin position="316"/>
        <end position="321"/>
    </location>
</feature>
<feature type="strand" evidence="35">
    <location>
        <begin position="329"/>
        <end position="337"/>
    </location>
</feature>
<feature type="strand" evidence="35">
    <location>
        <begin position="353"/>
        <end position="360"/>
    </location>
</feature>
<gene>
    <name evidence="23" type="primary">TDP2</name>
    <name evidence="20" type="synonym">EAP2</name>
    <name evidence="19 22" type="synonym">TTRAP</name>
    <name type="ORF">AD-022</name>
</gene>
<comment type="function">
    <text evidence="7 8 9 10 11 12 14 15 16">DNA repair enzyme that can remove a variety of covalent adducts from DNA through hydrolysis of a 5'-phosphodiester bond, giving rise to DNA with a free 5' phosphate. Catalyzes the hydrolysis of dead-end complexes between DNA and the topoisomerase 2 (TOP2) active site tyrosine residue. The 5'-tyrosyl DNA phosphodiesterase activity can enable the repair of TOP2-induced DNA double-strand breaks/DSBs without the need for nuclease activity, creating a 'clean' DSB with 5'-phosphate termini that are ready for ligation (PubMed:27060144, PubMed:27099339). Thereby, protects the transcription of many genes involved in neurological development and maintenance from the abortive activity of TOP2. Hydrolyzes 5'-phosphoglycolates on protruding 5' ends on DSBs due to DNA damage by radiation and free radicals. Has preference for single-stranded DNA or duplex DNA with a 4 base pair overhang as substrate. Acts as a regulator of ribosome biogenesis following stress. Also has 3'-tyrosyl DNA phosphodiesterase activity, but less efficiently and much slower than TDP1. Constitutes the major if not only 5'-tyrosyl-DNA phosphodiesterase in cells. Also acts as an adapter by participating in the specific activation of MAP3K7/TAK1 in response to TGF-beta: associates with components of the TGF-beta receptor-TRAF6-TAK1 signaling module and promotes their ubiquitination dependent complex formation. Involved in non-canonical TGF-beta induced signaling routes. May also act as a negative regulator of ETS1 and may inhibit NF-kappa-B activation.</text>
</comment>
<comment type="function">
    <text evidence="13 17">(Microbial infection) Used by picornaviruses to remove the small polypeptide, VPg (virus Protein genome-linked, the primer for viral RNA synthesis), from the genomic RNA of the virus. Acts as a 5'-tyrosyl RNA phosphodiesterase and cleaves the covalent VPg-Tyr-RNA bond. This cleavage would play a role in viral replication and occur in viral replication vesicles, but would not act on viral mRNA.</text>
</comment>
<comment type="cofactor">
    <cofactor evidence="7 11 12 15 16">
        <name>Mg(2+)</name>
        <dbReference type="ChEBI" id="CHEBI:18420"/>
    </cofactor>
    <cofactor evidence="7 11 12">
        <name>Mn(2+)</name>
        <dbReference type="ChEBI" id="CHEBI:29035"/>
    </cofactor>
    <text evidence="7 11 12 15 16">Binds 1 magnesium or manganese ion per subunit.</text>
</comment>
<comment type="biophysicochemical properties">
    <kinetics>
        <KM evidence="12">8 uM for single-stranded 5'-tyrosyl DNA</KM>
        <text>kcat is 3 sec(-1) with single-stranded 5'-tyrosyl DNA as substrate.</text>
    </kinetics>
</comment>
<comment type="subunit">
    <text evidence="3 4 6">Interacts with TRAF2, TRAF3, TRAF5, TRAF6, TNFRSF8/CD30, TNFRSF5/CD40, TNFRSF1B/TNF-R75, ETS1, ETS2, FLI1, SMAD3 and ACVR1B/ALK4.</text>
</comment>
<comment type="subunit">
    <text evidence="5">(Microbial infection) Interacts with Hantaan hantavirus nucleoprotein.</text>
</comment>
<comment type="subunit">
    <text evidence="5">(Microbial infection) Interacts with Seoul hantavirus nucleoprotein.</text>
</comment>
<comment type="interaction">
    <interactant intactId="EBI-2819865">
        <id>O95551</id>
    </interactant>
    <interactant intactId="EBI-946046">
        <id>P54252</id>
        <label>ATXN3</label>
    </interactant>
    <organismsDiffer>false</organismsDiffer>
    <experiments>3</experiments>
</comment>
<comment type="interaction">
    <interactant intactId="EBI-2819865">
        <id>O95551</id>
    </interactant>
    <interactant intactId="EBI-2105445">
        <id>P51451</id>
        <label>BLK</label>
    </interactant>
    <organismsDiffer>false</organismsDiffer>
    <experiments>3</experiments>
</comment>
<comment type="interaction">
    <interactant intactId="EBI-2819865">
        <id>O95551</id>
    </interactant>
    <interactant intactId="EBI-10968534">
        <id>P50570-2</id>
        <label>DNM2</label>
    </interactant>
    <organismsDiffer>false</organismsDiffer>
    <experiments>3</experiments>
</comment>
<comment type="subcellular location">
    <subcellularLocation>
        <location evidence="4">Nucleus</location>
    </subcellularLocation>
    <subcellularLocation>
        <location evidence="7 9">Nucleus</location>
        <location evidence="7 9">PML body</location>
    </subcellularLocation>
    <subcellularLocation>
        <location evidence="9">Nucleus</location>
        <location evidence="9">Nucleolus</location>
    </subcellularLocation>
    <subcellularLocation>
        <location>Cytoplasm</location>
    </subcellularLocation>
    <text evidence="9">Localizes to nucleolar cavities following stress; localization to nucleolus is dependent on PML protein.</text>
</comment>
<comment type="subcellular location">
    <subcellularLocation>
        <location evidence="13">Cytoplasm</location>
    </subcellularLocation>
    <text evidence="13">(Microbial infection) In case of infection by picornavirus, relocalizes to cytoplasmic sites distinct from those containing viral proteins associated with RNA replication or encapsidation.</text>
</comment>
<comment type="alternative products">
    <event type="alternative splicing"/>
    <isoform>
        <id>O95551-1</id>
        <name>1</name>
        <sequence type="displayed"/>
    </isoform>
    <isoform>
        <id>O95551-2</id>
        <name>2</name>
        <sequence type="described" ref="VSP_038523"/>
    </isoform>
    <isoform>
        <id>O95551-3</id>
        <name>3</name>
        <sequence type="described" ref="VSP_038524"/>
    </isoform>
</comment>
<comment type="tissue specificity">
    <text evidence="3 14">Widely expressed (PubMed:10764746). Highly expressed in various brain regions, including the frontal and occipital lobes, the hippocampus, the striatum and the cerebellum (PubMed:24658003).</text>
</comment>
<comment type="PTM">
    <text evidence="10">Ubiquitinated by TRAF6.</text>
</comment>
<comment type="disease" evidence="14">
    <disease id="DI-04714">
        <name>Spinocerebellar ataxia, autosomal recessive, 23</name>
        <acronym>SCAR23</acronym>
        <description>A form of spinocerebellar ataxia, a clinically and genetically heterogeneous group of cerebellar disorders due to degeneration of the cerebellum with variable involvement of the brainstem and spinal cord. SCAR23 patients manifest epilepsy, intellectual disability, and gait ataxia.</description>
        <dbReference type="MIM" id="616949"/>
    </disease>
    <text>The disease is caused by variants affecting the gene represented in this entry.</text>
</comment>
<comment type="similarity">
    <text evidence="24">Belongs to the CCR4/nocturin family.</text>
</comment>
<comment type="sequence caution" evidence="24">
    <conflict type="erroneous initiation">
        <sequence resource="EMBL-CDS" id="BAG59230"/>
    </conflict>
    <text>Truncated N-terminus.</text>
</comment>
<dbReference type="EC" id="3.1.4.-" evidence="7 11 12 15 16"/>
<dbReference type="EMBL" id="AJ269473">
    <property type="protein sequence ID" value="CAB92966.1"/>
    <property type="molecule type" value="mRNA"/>
</dbReference>
<dbReference type="EMBL" id="AF201687">
    <property type="protein sequence ID" value="AAG35600.1"/>
    <property type="molecule type" value="mRNA"/>
</dbReference>
<dbReference type="EMBL" id="AF223469">
    <property type="protein sequence ID" value="AAF64144.1"/>
    <property type="molecule type" value="mRNA"/>
</dbReference>
<dbReference type="EMBL" id="AK002168">
    <property type="protein sequence ID" value="BAA92119.1"/>
    <property type="molecule type" value="mRNA"/>
</dbReference>
<dbReference type="EMBL" id="AK296623">
    <property type="protein sequence ID" value="BAG59230.1"/>
    <property type="status" value="ALT_INIT"/>
    <property type="molecule type" value="mRNA"/>
</dbReference>
<dbReference type="EMBL" id="AK298699">
    <property type="protein sequence ID" value="BAG60857.1"/>
    <property type="molecule type" value="mRNA"/>
</dbReference>
<dbReference type="EMBL" id="AY613922">
    <property type="protein sequence ID" value="AAT09764.1"/>
    <property type="molecule type" value="Genomic_DNA"/>
</dbReference>
<dbReference type="EMBL" id="AL031775">
    <property type="status" value="NOT_ANNOTATED_CDS"/>
    <property type="molecule type" value="Genomic_DNA"/>
</dbReference>
<dbReference type="EMBL" id="BC017553">
    <property type="protein sequence ID" value="AAH17553.1"/>
    <property type="molecule type" value="mRNA"/>
</dbReference>
<dbReference type="EMBL" id="BC110375">
    <property type="protein sequence ID" value="AAI10376.1"/>
    <property type="molecule type" value="mRNA"/>
</dbReference>
<dbReference type="CCDS" id="CCDS4557.1">
    <molecule id="O95551-1"/>
</dbReference>
<dbReference type="RefSeq" id="NP_057698.2">
    <molecule id="O95551-1"/>
    <property type="nucleotide sequence ID" value="NM_016614.2"/>
</dbReference>
<dbReference type="PDB" id="5INO">
    <property type="method" value="X-ray"/>
    <property type="resolution" value="3.21 A"/>
    <property type="chains" value="A/B=108-362"/>
</dbReference>
<dbReference type="PDB" id="5J3P">
    <property type="method" value="X-ray"/>
    <property type="resolution" value="3.10 A"/>
    <property type="chains" value="A/B=113-362"/>
</dbReference>
<dbReference type="PDB" id="5J3S">
    <property type="method" value="X-ray"/>
    <property type="resolution" value="3.40 A"/>
    <property type="chains" value="A=113-362"/>
</dbReference>
<dbReference type="PDB" id="6Q00">
    <property type="method" value="X-ray"/>
    <property type="resolution" value="0.85 A"/>
    <property type="chains" value="B=25-66"/>
</dbReference>
<dbReference type="PDB" id="6Q01">
    <property type="method" value="X-ray"/>
    <property type="resolution" value="0.85 A"/>
    <property type="chains" value="C/D=25-66"/>
</dbReference>
<dbReference type="PDBsum" id="5INO"/>
<dbReference type="PDBsum" id="5J3P"/>
<dbReference type="PDBsum" id="5J3S"/>
<dbReference type="PDBsum" id="6Q00"/>
<dbReference type="PDBsum" id="6Q01"/>
<dbReference type="SMR" id="O95551"/>
<dbReference type="BioGRID" id="119615">
    <property type="interactions" value="81"/>
</dbReference>
<dbReference type="FunCoup" id="O95551">
    <property type="interactions" value="2683"/>
</dbReference>
<dbReference type="IntAct" id="O95551">
    <property type="interactions" value="56"/>
</dbReference>
<dbReference type="MINT" id="O95551"/>
<dbReference type="STRING" id="9606.ENSP00000367440"/>
<dbReference type="BindingDB" id="O95551"/>
<dbReference type="ChEMBL" id="CHEMBL2169736"/>
<dbReference type="GlyGen" id="O95551">
    <property type="glycosylation" value="1 site, 1 O-linked glycan (1 site)"/>
</dbReference>
<dbReference type="iPTMnet" id="O95551"/>
<dbReference type="PhosphoSitePlus" id="O95551"/>
<dbReference type="BioMuta" id="TDP2"/>
<dbReference type="jPOST" id="O95551"/>
<dbReference type="MassIVE" id="O95551"/>
<dbReference type="PaxDb" id="9606-ENSP00000367440"/>
<dbReference type="PeptideAtlas" id="O95551"/>
<dbReference type="ProteomicsDB" id="50937">
    <molecule id="O95551-1"/>
</dbReference>
<dbReference type="ProteomicsDB" id="50938">
    <molecule id="O95551-2"/>
</dbReference>
<dbReference type="ProteomicsDB" id="50939">
    <molecule id="O95551-3"/>
</dbReference>
<dbReference type="Pumba" id="O95551"/>
<dbReference type="Antibodypedia" id="10651">
    <property type="antibodies" value="322 antibodies from 33 providers"/>
</dbReference>
<dbReference type="CPTC" id="O95551">
    <property type="antibodies" value="3 antibodies"/>
</dbReference>
<dbReference type="DNASU" id="51567"/>
<dbReference type="Ensembl" id="ENST00000378198.9">
    <molecule id="O95551-1"/>
    <property type="protein sequence ID" value="ENSP00000367440.4"/>
    <property type="gene ID" value="ENSG00000111802.14"/>
</dbReference>
<dbReference type="GeneID" id="51567"/>
<dbReference type="KEGG" id="hsa:51567"/>
<dbReference type="MANE-Select" id="ENST00000378198.9">
    <property type="protein sequence ID" value="ENSP00000367440.4"/>
    <property type="RefSeq nucleotide sequence ID" value="NM_016614.3"/>
    <property type="RefSeq protein sequence ID" value="NP_057698.2"/>
</dbReference>
<dbReference type="UCSC" id="uc003nej.4">
    <molecule id="O95551-1"/>
    <property type="organism name" value="human"/>
</dbReference>
<dbReference type="AGR" id="HGNC:17768"/>
<dbReference type="CTD" id="51567"/>
<dbReference type="DisGeNET" id="51567"/>
<dbReference type="GeneCards" id="TDP2"/>
<dbReference type="HGNC" id="HGNC:17768">
    <property type="gene designation" value="TDP2"/>
</dbReference>
<dbReference type="HPA" id="ENSG00000111802">
    <property type="expression patterns" value="Tissue enhanced (intestine)"/>
</dbReference>
<dbReference type="MalaCards" id="TDP2"/>
<dbReference type="MIM" id="605764">
    <property type="type" value="gene"/>
</dbReference>
<dbReference type="MIM" id="616949">
    <property type="type" value="phenotype"/>
</dbReference>
<dbReference type="neXtProt" id="NX_O95551"/>
<dbReference type="OpenTargets" id="ENSG00000111802"/>
<dbReference type="Orphanet" id="404493">
    <property type="disease" value="Autosomal recessive cerebellar ataxia-epilepsy-intellectual disability syndrome due to TUD deficiency"/>
</dbReference>
<dbReference type="PharmGKB" id="PA165618310"/>
<dbReference type="VEuPathDB" id="HostDB:ENSG00000111802"/>
<dbReference type="eggNOG" id="KOG2756">
    <property type="taxonomic scope" value="Eukaryota"/>
</dbReference>
<dbReference type="GeneTree" id="ENSGT00390000014242"/>
<dbReference type="HOGENOM" id="CLU_047318_0_0_1"/>
<dbReference type="InParanoid" id="O95551"/>
<dbReference type="OMA" id="HRFDRIF"/>
<dbReference type="OrthoDB" id="9975959at2759"/>
<dbReference type="PAN-GO" id="O95551">
    <property type="GO annotations" value="5 GO annotations based on evolutionary models"/>
</dbReference>
<dbReference type="PhylomeDB" id="O95551"/>
<dbReference type="TreeFam" id="TF314813"/>
<dbReference type="PathwayCommons" id="O95551"/>
<dbReference type="Reactome" id="R-HSA-5693571">
    <property type="pathway name" value="Nonhomologous End-Joining (NHEJ)"/>
</dbReference>
<dbReference type="SignaLink" id="O95551"/>
<dbReference type="SIGNOR" id="O95551"/>
<dbReference type="BioGRID-ORCS" id="51567">
    <property type="hits" value="122 hits in 1161 CRISPR screens"/>
</dbReference>
<dbReference type="ChiTaRS" id="TDP2">
    <property type="organism name" value="human"/>
</dbReference>
<dbReference type="GeneWiki" id="TTRAP"/>
<dbReference type="GenomeRNAi" id="51567"/>
<dbReference type="Pharos" id="O95551">
    <property type="development level" value="Tchem"/>
</dbReference>
<dbReference type="PRO" id="PR:O95551"/>
<dbReference type="Proteomes" id="UP000005640">
    <property type="component" value="Chromosome 6"/>
</dbReference>
<dbReference type="RNAct" id="O95551">
    <property type="molecule type" value="protein"/>
</dbReference>
<dbReference type="Bgee" id="ENSG00000111802">
    <property type="expression patterns" value="Expressed in jejunal mucosa and 213 other cell types or tissues"/>
</dbReference>
<dbReference type="ExpressionAtlas" id="O95551">
    <property type="expression patterns" value="baseline and differential"/>
</dbReference>
<dbReference type="GO" id="GO:0016235">
    <property type="term" value="C:aggresome"/>
    <property type="evidence" value="ECO:0000314"/>
    <property type="project" value="HPA"/>
</dbReference>
<dbReference type="GO" id="GO:0005737">
    <property type="term" value="C:cytoplasm"/>
    <property type="evidence" value="ECO:0000314"/>
    <property type="project" value="UniProtKB"/>
</dbReference>
<dbReference type="GO" id="GO:0016604">
    <property type="term" value="C:nuclear body"/>
    <property type="evidence" value="ECO:0000314"/>
    <property type="project" value="HPA"/>
</dbReference>
<dbReference type="GO" id="GO:0005730">
    <property type="term" value="C:nucleolus"/>
    <property type="evidence" value="ECO:0007669"/>
    <property type="project" value="UniProtKB-SubCell"/>
</dbReference>
<dbReference type="GO" id="GO:0005654">
    <property type="term" value="C:nucleoplasm"/>
    <property type="evidence" value="ECO:0000314"/>
    <property type="project" value="HPA"/>
</dbReference>
<dbReference type="GO" id="GO:0005634">
    <property type="term" value="C:nucleus"/>
    <property type="evidence" value="ECO:0000314"/>
    <property type="project" value="UniProtKB"/>
</dbReference>
<dbReference type="GO" id="GO:0016605">
    <property type="term" value="C:PML body"/>
    <property type="evidence" value="ECO:0000314"/>
    <property type="project" value="UniProtKB"/>
</dbReference>
<dbReference type="GO" id="GO:0070260">
    <property type="term" value="F:5'-tyrosyl-DNA phosphodiesterase activity"/>
    <property type="evidence" value="ECO:0000314"/>
    <property type="project" value="UniProtKB"/>
</dbReference>
<dbReference type="GO" id="GO:0000287">
    <property type="term" value="F:magnesium ion binding"/>
    <property type="evidence" value="ECO:0000314"/>
    <property type="project" value="UniProtKB"/>
</dbReference>
<dbReference type="GO" id="GO:0030145">
    <property type="term" value="F:manganese ion binding"/>
    <property type="evidence" value="ECO:0000314"/>
    <property type="project" value="UniProtKB"/>
</dbReference>
<dbReference type="GO" id="GO:0004518">
    <property type="term" value="F:nuclease activity"/>
    <property type="evidence" value="ECO:0007669"/>
    <property type="project" value="UniProtKB-KW"/>
</dbReference>
<dbReference type="GO" id="GO:0003697">
    <property type="term" value="F:single-stranded DNA binding"/>
    <property type="evidence" value="ECO:0000314"/>
    <property type="project" value="UniProtKB"/>
</dbReference>
<dbReference type="GO" id="GO:0003714">
    <property type="term" value="F:transcription corepressor activity"/>
    <property type="evidence" value="ECO:0000304"/>
    <property type="project" value="ProtInc"/>
</dbReference>
<dbReference type="GO" id="GO:0036317">
    <property type="term" value="F:tyrosyl-RNA phosphodiesterase activity"/>
    <property type="evidence" value="ECO:0000314"/>
    <property type="project" value="UniProtKB"/>
</dbReference>
<dbReference type="GO" id="GO:0007166">
    <property type="term" value="P:cell surface receptor signaling pathway"/>
    <property type="evidence" value="ECO:0000304"/>
    <property type="project" value="ProtInc"/>
</dbReference>
<dbReference type="GO" id="GO:0006302">
    <property type="term" value="P:double-strand break repair"/>
    <property type="evidence" value="ECO:0000314"/>
    <property type="project" value="UniProtKB"/>
</dbReference>
<dbReference type="GO" id="GO:0048666">
    <property type="term" value="P:neuron development"/>
    <property type="evidence" value="ECO:0000315"/>
    <property type="project" value="UniProtKB"/>
</dbReference>
<dbReference type="CDD" id="cd09080">
    <property type="entry name" value="TDP2"/>
    <property type="match status" value="1"/>
</dbReference>
<dbReference type="CDD" id="cd14344">
    <property type="entry name" value="UBA_TYDP2"/>
    <property type="match status" value="1"/>
</dbReference>
<dbReference type="FunFam" id="1.10.8.10:FF:000089">
    <property type="entry name" value="Tyrosyl-DNA phosphodiesterase 2"/>
    <property type="match status" value="1"/>
</dbReference>
<dbReference type="FunFam" id="3.60.10.10:FF:000024">
    <property type="entry name" value="Tyrosyl-DNA phosphodiesterase 2"/>
    <property type="match status" value="1"/>
</dbReference>
<dbReference type="Gene3D" id="1.10.8.10">
    <property type="entry name" value="DNA helicase RuvA subunit, C-terminal domain"/>
    <property type="match status" value="1"/>
</dbReference>
<dbReference type="Gene3D" id="3.60.10.10">
    <property type="entry name" value="Endonuclease/exonuclease/phosphatase"/>
    <property type="match status" value="1"/>
</dbReference>
<dbReference type="InterPro" id="IPR036691">
    <property type="entry name" value="Endo/exonu/phosph_ase_sf"/>
</dbReference>
<dbReference type="InterPro" id="IPR005135">
    <property type="entry name" value="Endo/exonuclease/phosphatase"/>
</dbReference>
<dbReference type="InterPro" id="IPR051547">
    <property type="entry name" value="TDP2-like"/>
</dbReference>
<dbReference type="InterPro" id="IPR009060">
    <property type="entry name" value="UBA-like_sf"/>
</dbReference>
<dbReference type="PANTHER" id="PTHR15822">
    <property type="entry name" value="TRAF AND TNF RECEPTOR-ASSOCIATED PROTEIN"/>
    <property type="match status" value="1"/>
</dbReference>
<dbReference type="PANTHER" id="PTHR15822:SF4">
    <property type="entry name" value="TYROSYL-DNA PHOSPHODIESTERASE 2"/>
    <property type="match status" value="1"/>
</dbReference>
<dbReference type="Pfam" id="PF03372">
    <property type="entry name" value="Exo_endo_phos"/>
    <property type="match status" value="1"/>
</dbReference>
<dbReference type="Pfam" id="PF14555">
    <property type="entry name" value="UBA_4"/>
    <property type="match status" value="1"/>
</dbReference>
<dbReference type="SUPFAM" id="SSF56219">
    <property type="entry name" value="DNase I-like"/>
    <property type="match status" value="1"/>
</dbReference>
<dbReference type="SUPFAM" id="SSF46934">
    <property type="entry name" value="UBA-like"/>
    <property type="match status" value="1"/>
</dbReference>